<dbReference type="EC" id="2.7.1.21"/>
<dbReference type="EMBL" id="K02031">
    <property type="protein sequence ID" value="AAA80461.1"/>
    <property type="molecule type" value="Genomic_DNA"/>
</dbReference>
<dbReference type="EMBL" id="S55844">
    <property type="protein sequence ID" value="AAB24675.1"/>
    <property type="molecule type" value="Genomic_DNA"/>
</dbReference>
<dbReference type="EMBL" id="L22579">
    <property type="protein sequence ID" value="AAA60827.1"/>
    <property type="molecule type" value="Genomic_DNA"/>
</dbReference>
<dbReference type="EMBL" id="Y16780">
    <property type="protein sequence ID" value="CAB54679.1"/>
    <property type="molecule type" value="Genomic_DNA"/>
</dbReference>
<dbReference type="PIR" id="E72160">
    <property type="entry name" value="E72160"/>
</dbReference>
<dbReference type="PIR" id="T28517">
    <property type="entry name" value="T28517"/>
</dbReference>
<dbReference type="SMR" id="P0DOM8"/>
<dbReference type="Proteomes" id="UP000111493">
    <property type="component" value="Segment"/>
</dbReference>
<dbReference type="Proteomes" id="UP000119805">
    <property type="component" value="Segment"/>
</dbReference>
<dbReference type="GO" id="GO:0005524">
    <property type="term" value="F:ATP binding"/>
    <property type="evidence" value="ECO:0007669"/>
    <property type="project" value="UniProtKB-KW"/>
</dbReference>
<dbReference type="GO" id="GO:0046872">
    <property type="term" value="F:metal ion binding"/>
    <property type="evidence" value="ECO:0007669"/>
    <property type="project" value="UniProtKB-KW"/>
</dbReference>
<dbReference type="GO" id="GO:0004797">
    <property type="term" value="F:thymidine kinase activity"/>
    <property type="evidence" value="ECO:0007669"/>
    <property type="project" value="UniProtKB-EC"/>
</dbReference>
<dbReference type="GO" id="GO:0071897">
    <property type="term" value="P:DNA biosynthetic process"/>
    <property type="evidence" value="ECO:0007669"/>
    <property type="project" value="UniProtKB-KW"/>
</dbReference>
<dbReference type="GO" id="GO:0046104">
    <property type="term" value="P:thymidine metabolic process"/>
    <property type="evidence" value="ECO:0007669"/>
    <property type="project" value="TreeGrafter"/>
</dbReference>
<dbReference type="FunFam" id="3.30.60.20:FF:000028">
    <property type="entry name" value="Thymidine kinase"/>
    <property type="match status" value="1"/>
</dbReference>
<dbReference type="FunFam" id="3.40.50.300:FF:000761">
    <property type="entry name" value="Thymidine kinase"/>
    <property type="match status" value="1"/>
</dbReference>
<dbReference type="Gene3D" id="3.30.60.20">
    <property type="match status" value="1"/>
</dbReference>
<dbReference type="Gene3D" id="3.40.50.300">
    <property type="entry name" value="P-loop containing nucleotide triphosphate hydrolases"/>
    <property type="match status" value="1"/>
</dbReference>
<dbReference type="InterPro" id="IPR027417">
    <property type="entry name" value="P-loop_NTPase"/>
</dbReference>
<dbReference type="InterPro" id="IPR001267">
    <property type="entry name" value="Thymidine_kinase"/>
</dbReference>
<dbReference type="InterPro" id="IPR020633">
    <property type="entry name" value="Thymidine_kinase_CS"/>
</dbReference>
<dbReference type="PANTHER" id="PTHR11441">
    <property type="entry name" value="THYMIDINE KINASE"/>
    <property type="match status" value="1"/>
</dbReference>
<dbReference type="PANTHER" id="PTHR11441:SF0">
    <property type="entry name" value="THYMIDINE KINASE, CYTOSOLIC"/>
    <property type="match status" value="1"/>
</dbReference>
<dbReference type="Pfam" id="PF00265">
    <property type="entry name" value="TK"/>
    <property type="match status" value="1"/>
</dbReference>
<dbReference type="PIRSF" id="PIRSF035805">
    <property type="entry name" value="TK_cell"/>
    <property type="match status" value="1"/>
</dbReference>
<dbReference type="SUPFAM" id="SSF57716">
    <property type="entry name" value="Glucocorticoid receptor-like (DNA-binding domain)"/>
    <property type="match status" value="1"/>
</dbReference>
<dbReference type="SUPFAM" id="SSF52540">
    <property type="entry name" value="P-loop containing nucleoside triphosphate hydrolases"/>
    <property type="match status" value="1"/>
</dbReference>
<dbReference type="PROSITE" id="PS00603">
    <property type="entry name" value="TK_CELLULAR_TYPE"/>
    <property type="match status" value="1"/>
</dbReference>
<feature type="chain" id="PRO_0000448110" description="Thymidine kinase">
    <location>
        <begin position="1"/>
        <end position="177"/>
    </location>
</feature>
<feature type="active site" description="Proton acceptor" evidence="2">
    <location>
        <position position="83"/>
    </location>
</feature>
<feature type="binding site" evidence="2">
    <location>
        <begin position="11"/>
        <end position="18"/>
    </location>
    <ligand>
        <name>ATP</name>
        <dbReference type="ChEBI" id="CHEBI:30616"/>
    </ligand>
</feature>
<feature type="binding site" evidence="2">
    <location>
        <position position="113"/>
    </location>
    <ligand>
        <name>substrate</name>
    </ligand>
</feature>
<feature type="binding site" evidence="2">
    <location>
        <position position="138"/>
    </location>
    <ligand>
        <name>Zn(2+)</name>
        <dbReference type="ChEBI" id="CHEBI:29105"/>
    </ligand>
</feature>
<feature type="binding site" evidence="2">
    <location>
        <position position="141"/>
    </location>
    <ligand>
        <name>Zn(2+)</name>
        <dbReference type="ChEBI" id="CHEBI:29105"/>
    </ligand>
</feature>
<feature type="binding site" evidence="2">
    <location>
        <begin position="157"/>
        <end position="161"/>
    </location>
    <ligand>
        <name>substrate</name>
    </ligand>
</feature>
<feature type="binding site" evidence="2">
    <location>
        <position position="170"/>
    </location>
    <ligand>
        <name>Zn(2+)</name>
        <dbReference type="ChEBI" id="CHEBI:29105"/>
    </ligand>
</feature>
<feature type="binding site" evidence="2">
    <location>
        <position position="173"/>
    </location>
    <ligand>
        <name>Zn(2+)</name>
        <dbReference type="ChEBI" id="CHEBI:29105"/>
    </ligand>
</feature>
<feature type="disulfide bond" description="Interchain (with C-173)" evidence="2">
    <location>
        <position position="170"/>
    </location>
</feature>
<feature type="disulfide bond" description="Interchain (with C-170)" evidence="2">
    <location>
        <position position="173"/>
    </location>
</feature>
<feature type="sequence variant" description="In strain: Bangladesh-1975.">
    <original>I</original>
    <variation>V</variation>
    <location>
        <position position="90"/>
    </location>
</feature>
<feature type="sequence variant" description="In strain: Bangladesh-1975.">
    <original>A</original>
    <variation>T</variation>
    <location>
        <position position="153"/>
    </location>
</feature>
<feature type="sequence variant" description="In strain: Bangladesh-1975.">
    <original>I</original>
    <variation>N</variation>
    <location>
        <position position="163"/>
    </location>
</feature>
<protein>
    <recommendedName>
        <fullName>Thymidine kinase</fullName>
        <ecNumber>2.7.1.21</ecNumber>
    </recommendedName>
</protein>
<reference key="1">
    <citation type="journal article" date="1984" name="Virology">
        <title>Nucleotide sequence of the thymidine kinase gene region of monkeypox and variola viruses.</title>
        <authorList>
            <person name="Esposito J.J."/>
            <person name="Knight J.C."/>
        </authorList>
    </citation>
    <scope>NUCLEOTIDE SEQUENCE [GENOMIC DNA]</scope>
    <source>
        <strain>Bangladesh-1975</strain>
    </source>
</reference>
<reference key="2">
    <citation type="journal article" date="1993" name="Nature">
        <title>Potential virulence determinants in terminal regions of variola smallpox virus genome.</title>
        <authorList>
            <person name="Massung R.F."/>
            <person name="Esposito J.J."/>
            <person name="Liu L.I."/>
            <person name="Qi J."/>
            <person name="Utterback T.R."/>
            <person name="Knight J.C."/>
            <person name="Aubin L."/>
            <person name="Yuran T.E."/>
            <person name="Parsons J.M."/>
            <person name="Loparev V.N."/>
            <person name="Selivanov N.A."/>
            <person name="Cavallaro K.F."/>
            <person name="Kerlavage A.R."/>
            <person name="Mahy B.W.J."/>
            <person name="Venter J.C."/>
        </authorList>
    </citation>
    <scope>NUCLEOTIDE SEQUENCE [GENOMIC DNA]</scope>
    <source>
        <strain>Bangladesh-1975</strain>
    </source>
</reference>
<reference key="3">
    <citation type="journal article" date="2000" name="Virology">
        <title>Alastrim smallpox variola minor virus genome DNA sequences.</title>
        <authorList>
            <person name="Shchelkunov S.N."/>
            <person name="Totmenin A.V."/>
            <person name="Loparev V.N."/>
            <person name="Safronov P.F."/>
            <person name="Gutorov V.V."/>
            <person name="Chizhikov V.E."/>
            <person name="Knight J.C."/>
            <person name="Parsons J.M."/>
            <person name="Massung R.F."/>
            <person name="Esposito J.J."/>
        </authorList>
    </citation>
    <scope>NUCLEOTIDE SEQUENCE [LARGE SCALE GENOMIC DNA]</scope>
    <source>
        <strain>Garcia-1966</strain>
    </source>
</reference>
<comment type="function">
    <text evidence="2">Phosphorylates thymidine and thymidine analogs, such as azidothymidine (AZT). Part of the salvage pathway for pyrimidine deoxyribonucleotide synthesis.</text>
</comment>
<comment type="catalytic activity">
    <reaction evidence="2">
        <text>thymidine + ATP = dTMP + ADP + H(+)</text>
        <dbReference type="Rhea" id="RHEA:19129"/>
        <dbReference type="ChEBI" id="CHEBI:15378"/>
        <dbReference type="ChEBI" id="CHEBI:17748"/>
        <dbReference type="ChEBI" id="CHEBI:30616"/>
        <dbReference type="ChEBI" id="CHEBI:63528"/>
        <dbReference type="ChEBI" id="CHEBI:456216"/>
        <dbReference type="EC" id="2.7.1.21"/>
    </reaction>
</comment>
<comment type="subunit">
    <text evidence="1">Homotetramer. Two molecules of substrate bind to each enzyme tetramer.</text>
</comment>
<comment type="similarity">
    <text evidence="3">Belongs to the thymidine kinase family.</text>
</comment>
<sequence>MNGGHIQLIIGPMFSGKSTELIRRVRRYQIAQYKCVTIKYSNDNRYGTGLWTHDKNNFEALEATKLCDVLEAITDFSVIGIDEGQFFPDIVEFCERMANEGKIVIVAALDGTFQRKPFNNILDLIPLSEMVVKLTAVCMKCFKEASFSKRLGAETKIEIIGGIDMYQSVCRKCYIDS</sequence>
<accession>P0DOM8</accession>
<accession>P04364</accession>
<accession>Q9QNJ1</accession>
<proteinExistence type="inferred from homology"/>
<name>KITH_VARV</name>
<organism>
    <name type="scientific">Variola virus</name>
    <dbReference type="NCBI Taxonomy" id="10255"/>
    <lineage>
        <taxon>Viruses</taxon>
        <taxon>Varidnaviria</taxon>
        <taxon>Bamfordvirae</taxon>
        <taxon>Nucleocytoviricota</taxon>
        <taxon>Pokkesviricetes</taxon>
        <taxon>Chitovirales</taxon>
        <taxon>Poxviridae</taxon>
        <taxon>Chordopoxvirinae</taxon>
        <taxon>Orthopoxvirus</taxon>
    </lineage>
</organism>
<keyword id="KW-0067">ATP-binding</keyword>
<keyword id="KW-1015">Disulfide bond</keyword>
<keyword id="KW-0237">DNA synthesis</keyword>
<keyword id="KW-0418">Kinase</keyword>
<keyword id="KW-0479">Metal-binding</keyword>
<keyword id="KW-0547">Nucleotide-binding</keyword>
<keyword id="KW-0808">Transferase</keyword>
<keyword id="KW-0862">Zinc</keyword>
<organismHost>
    <name type="scientific">Homo sapiens</name>
    <name type="common">Human</name>
    <dbReference type="NCBI Taxonomy" id="9606"/>
</organismHost>
<evidence type="ECO:0000250" key="1"/>
<evidence type="ECO:0000250" key="2">
    <source>
        <dbReference type="UniProtKB" id="O57203"/>
    </source>
</evidence>
<evidence type="ECO:0000305" key="3"/>
<gene>
    <name type="primary">OPG101</name>
    <name type="synonym">TK</name>
    <name type="ORF">J2R</name>
    <name type="ORF">L2R</name>
    <name type="ORF">M2R</name>
</gene>